<gene>
    <name evidence="1" type="primary">sfsA</name>
    <name type="ordered locus">MTH_1521</name>
</gene>
<reference key="1">
    <citation type="journal article" date="1997" name="J. Bacteriol.">
        <title>Complete genome sequence of Methanobacterium thermoautotrophicum deltaH: functional analysis and comparative genomics.</title>
        <authorList>
            <person name="Smith D.R."/>
            <person name="Doucette-Stamm L.A."/>
            <person name="Deloughery C."/>
            <person name="Lee H.-M."/>
            <person name="Dubois J."/>
            <person name="Aldredge T."/>
            <person name="Bashirzadeh R."/>
            <person name="Blakely D."/>
            <person name="Cook R."/>
            <person name="Gilbert K."/>
            <person name="Harrison D."/>
            <person name="Hoang L."/>
            <person name="Keagle P."/>
            <person name="Lumm W."/>
            <person name="Pothier B."/>
            <person name="Qiu D."/>
            <person name="Spadafora R."/>
            <person name="Vicare R."/>
            <person name="Wang Y."/>
            <person name="Wierzbowski J."/>
            <person name="Gibson R."/>
            <person name="Jiwani N."/>
            <person name="Caruso A."/>
            <person name="Bush D."/>
            <person name="Safer H."/>
            <person name="Patwell D."/>
            <person name="Prabhakar S."/>
            <person name="McDougall S."/>
            <person name="Shimer G."/>
            <person name="Goyal A."/>
            <person name="Pietrovski S."/>
            <person name="Church G.M."/>
            <person name="Daniels C.J."/>
            <person name="Mao J.-I."/>
            <person name="Rice P."/>
            <person name="Noelling J."/>
            <person name="Reeve J.N."/>
        </authorList>
    </citation>
    <scope>NUCLEOTIDE SEQUENCE [LARGE SCALE GENOMIC DNA]</scope>
    <source>
        <strain>ATCC 29096 / DSM 1053 / JCM 10044 / NBRC 100330 / Delta H</strain>
    </source>
</reference>
<name>SFSA_METTH</name>
<keyword id="KW-1185">Reference proteome</keyword>
<comment type="similarity">
    <text evidence="1">Belongs to the SfsA family.</text>
</comment>
<evidence type="ECO:0000255" key="1">
    <source>
        <dbReference type="HAMAP-Rule" id="MF_00095"/>
    </source>
</evidence>
<sequence>MMVAMIIENPLRGSYIERPNRFTVAVYVDGERRLAHLRDPGRLRELLIPGNDVILRKASSGNRKTEFDVIALRRDDEWVLVNSGFHSDLAASIIESSAVDEFRGFRIEKRECSFGRSRIDFLLASENERMLVEVKGCTLVRENLALFPDAPTERGRRHVEELERALSEGYHSSVLFLVFGRSARFFSPNHEMDPEFSSALRRAHEAGVNVIPYTLATDINEKVLVYPLRRIAVRWPGESP</sequence>
<accession>O27565</accession>
<protein>
    <recommendedName>
        <fullName evidence="1">Sugar fermentation stimulation protein homolog</fullName>
    </recommendedName>
</protein>
<organism>
    <name type="scientific">Methanothermobacter thermautotrophicus (strain ATCC 29096 / DSM 1053 / JCM 10044 / NBRC 100330 / Delta H)</name>
    <name type="common">Methanobacterium thermoautotrophicum</name>
    <dbReference type="NCBI Taxonomy" id="187420"/>
    <lineage>
        <taxon>Archaea</taxon>
        <taxon>Methanobacteriati</taxon>
        <taxon>Methanobacteriota</taxon>
        <taxon>Methanomada group</taxon>
        <taxon>Methanobacteria</taxon>
        <taxon>Methanobacteriales</taxon>
        <taxon>Methanobacteriaceae</taxon>
        <taxon>Methanothermobacter</taxon>
    </lineage>
</organism>
<dbReference type="EMBL" id="AE000666">
    <property type="protein sequence ID" value="AAB85996.1"/>
    <property type="molecule type" value="Genomic_DNA"/>
</dbReference>
<dbReference type="PIR" id="A69070">
    <property type="entry name" value="A69070"/>
</dbReference>
<dbReference type="RefSeq" id="WP_010877131.1">
    <property type="nucleotide sequence ID" value="NC_000916.1"/>
</dbReference>
<dbReference type="SMR" id="O27565"/>
<dbReference type="STRING" id="187420.MTH_1521"/>
<dbReference type="PaxDb" id="187420-MTH_1521"/>
<dbReference type="EnsemblBacteria" id="AAB85996">
    <property type="protein sequence ID" value="AAB85996"/>
    <property type="gene ID" value="MTH_1521"/>
</dbReference>
<dbReference type="GeneID" id="1471790"/>
<dbReference type="GeneID" id="77402040"/>
<dbReference type="KEGG" id="mth:MTH_1521"/>
<dbReference type="PATRIC" id="fig|187420.15.peg.1484"/>
<dbReference type="HOGENOM" id="CLU_052299_1_0_2"/>
<dbReference type="InParanoid" id="O27565"/>
<dbReference type="Proteomes" id="UP000005223">
    <property type="component" value="Chromosome"/>
</dbReference>
<dbReference type="GO" id="GO:0003677">
    <property type="term" value="F:DNA binding"/>
    <property type="evidence" value="ECO:0007669"/>
    <property type="project" value="InterPro"/>
</dbReference>
<dbReference type="CDD" id="cd22357">
    <property type="entry name" value="SfsA-like"/>
    <property type="match status" value="1"/>
</dbReference>
<dbReference type="Gene3D" id="2.40.50.580">
    <property type="match status" value="1"/>
</dbReference>
<dbReference type="Gene3D" id="3.40.1350.60">
    <property type="match status" value="1"/>
</dbReference>
<dbReference type="HAMAP" id="MF_00095">
    <property type="entry name" value="SfsA"/>
    <property type="match status" value="1"/>
</dbReference>
<dbReference type="InterPro" id="IPR005224">
    <property type="entry name" value="SfsA"/>
</dbReference>
<dbReference type="InterPro" id="IPR040452">
    <property type="entry name" value="SfsA_C"/>
</dbReference>
<dbReference type="InterPro" id="IPR041465">
    <property type="entry name" value="SfsA_N"/>
</dbReference>
<dbReference type="NCBIfam" id="TIGR00230">
    <property type="entry name" value="sfsA"/>
    <property type="match status" value="1"/>
</dbReference>
<dbReference type="PANTHER" id="PTHR30545">
    <property type="entry name" value="SUGAR FERMENTATION STIMULATION PROTEIN A"/>
    <property type="match status" value="1"/>
</dbReference>
<dbReference type="PANTHER" id="PTHR30545:SF2">
    <property type="entry name" value="SUGAR FERMENTATION STIMULATION PROTEIN A"/>
    <property type="match status" value="1"/>
</dbReference>
<dbReference type="Pfam" id="PF03749">
    <property type="entry name" value="SfsA"/>
    <property type="match status" value="1"/>
</dbReference>
<dbReference type="Pfam" id="PF17746">
    <property type="entry name" value="SfsA_N"/>
    <property type="match status" value="1"/>
</dbReference>
<proteinExistence type="inferred from homology"/>
<feature type="chain" id="PRO_0000152323" description="Sugar fermentation stimulation protein homolog">
    <location>
        <begin position="1"/>
        <end position="240"/>
    </location>
</feature>